<feature type="signal peptide" evidence="2">
    <location>
        <begin position="1"/>
        <end position="22"/>
    </location>
</feature>
<feature type="propeptide" id="PRO_0000430900" evidence="1">
    <location>
        <begin position="23"/>
        <end position="35"/>
    </location>
</feature>
<feature type="chain" id="PRO_0000430901" description="Omega/Kappa-hexatoxin-Hv1h">
    <location>
        <begin position="38"/>
        <end position="76"/>
    </location>
</feature>
<feature type="disulfide bond" evidence="6">
    <location>
        <begin position="40"/>
        <end position="55"/>
    </location>
</feature>
<feature type="disulfide bond" evidence="6">
    <location>
        <begin position="47"/>
        <end position="60"/>
    </location>
</feature>
<feature type="disulfide bond" evidence="6">
    <location>
        <begin position="54"/>
        <end position="74"/>
    </location>
</feature>
<feature type="sequence conflict" description="In Ref. 2." evidence="4" ref="2">
    <original>QY</original>
    <variation>GS</variation>
    <location>
        <begin position="38"/>
        <end position="39"/>
    </location>
</feature>
<feature type="strand" evidence="7">
    <location>
        <begin position="59"/>
        <end position="64"/>
    </location>
</feature>
<feature type="strand" evidence="7">
    <location>
        <begin position="70"/>
        <end position="75"/>
    </location>
</feature>
<reference key="1">
    <citation type="journal article" date="2014" name="BMC Genomics">
        <title>Diversification of a single ancestral gene into a successful toxin superfamily in highly venomous Australian funnel-web spiders.</title>
        <authorList>
            <person name="Pineda S.S."/>
            <person name="Sollod B.L."/>
            <person name="Wilson D."/>
            <person name="Darling A."/>
            <person name="Sunagar K."/>
            <person name="Undheim E.A."/>
            <person name="Kely L."/>
            <person name="Antunes A."/>
            <person name="Fry B.G."/>
            <person name="King G.F."/>
        </authorList>
    </citation>
    <scope>NUCLEOTIDE SEQUENCE [MRNA]</scope>
    <source>
        <tissue>Venom gland</tissue>
    </source>
</reference>
<reference key="2">
    <citation type="submission" date="2007-05" db="PDB data bank">
        <title>Structure of a dual-target spider toxin.</title>
        <authorList>
            <person name="Sollod B.L."/>
            <person name="Gunning S.J."/>
            <person name="Maciejewski M.W."/>
            <person name="King G.F."/>
        </authorList>
    </citation>
    <scope>STRUCTURE BY NMR OF 38-76</scope>
    <scope>DISULFIDE BONDS</scope>
    <scope>RECOMBINANT EXPRESSION</scope>
</reference>
<keyword id="KW-0002">3D-structure</keyword>
<keyword id="KW-0165">Cleavage on pair of basic residues</keyword>
<keyword id="KW-1015">Disulfide bond</keyword>
<keyword id="KW-0872">Ion channel impairing toxin</keyword>
<keyword id="KW-0960">Knottin</keyword>
<keyword id="KW-0964">Secreted</keyword>
<keyword id="KW-0732">Signal</keyword>
<keyword id="KW-0800">Toxin</keyword>
<evidence type="ECO:0000250" key="1"/>
<evidence type="ECO:0000255" key="2"/>
<evidence type="ECO:0000303" key="3">
    <source>
    </source>
</evidence>
<evidence type="ECO:0000305" key="4"/>
<evidence type="ECO:0000305" key="5">
    <source>
    </source>
</evidence>
<evidence type="ECO:0007744" key="6">
    <source>
        <dbReference type="PDB" id="2H1Z"/>
    </source>
</evidence>
<evidence type="ECO:0007829" key="7">
    <source>
        <dbReference type="PDB" id="2H1Z"/>
    </source>
</evidence>
<organism>
    <name type="scientific">Hadronyche versuta</name>
    <name type="common">Blue mountains funnel-web spider</name>
    <name type="synonym">Atrax versutus</name>
    <dbReference type="NCBI Taxonomy" id="6904"/>
    <lineage>
        <taxon>Eukaryota</taxon>
        <taxon>Metazoa</taxon>
        <taxon>Ecdysozoa</taxon>
        <taxon>Arthropoda</taxon>
        <taxon>Chelicerata</taxon>
        <taxon>Arachnida</taxon>
        <taxon>Araneae</taxon>
        <taxon>Mygalomorphae</taxon>
        <taxon>Hexathelidae</taxon>
        <taxon>Hadronyche</taxon>
    </lineage>
</organism>
<dbReference type="EMBL" id="HG001308">
    <property type="protein sequence ID" value="CDF44169.1"/>
    <property type="molecule type" value="mRNA"/>
</dbReference>
<dbReference type="PDB" id="2H1Z">
    <property type="method" value="NMR"/>
    <property type="chains" value="A=38-76"/>
</dbReference>
<dbReference type="PDBsum" id="2H1Z"/>
<dbReference type="BMRB" id="S0F209"/>
<dbReference type="SMR" id="S0F209"/>
<dbReference type="EvolutionaryTrace" id="S0F209"/>
<dbReference type="GO" id="GO:0005576">
    <property type="term" value="C:extracellular region"/>
    <property type="evidence" value="ECO:0007669"/>
    <property type="project" value="UniProtKB-SubCell"/>
</dbReference>
<dbReference type="GO" id="GO:0019855">
    <property type="term" value="F:calcium channel inhibitor activity"/>
    <property type="evidence" value="ECO:0007669"/>
    <property type="project" value="InterPro"/>
</dbReference>
<dbReference type="GO" id="GO:0090729">
    <property type="term" value="F:toxin activity"/>
    <property type="evidence" value="ECO:0007669"/>
    <property type="project" value="UniProtKB-KW"/>
</dbReference>
<dbReference type="GO" id="GO:0006952">
    <property type="term" value="P:defense response"/>
    <property type="evidence" value="ECO:0007669"/>
    <property type="project" value="InterPro"/>
</dbReference>
<dbReference type="InterPro" id="IPR009415">
    <property type="entry name" value="Omega-atracotox"/>
</dbReference>
<dbReference type="Pfam" id="PF06357">
    <property type="entry name" value="Omega-toxin"/>
    <property type="match status" value="1"/>
</dbReference>
<dbReference type="SUPFAM" id="SSF57059">
    <property type="entry name" value="omega toxin-like"/>
    <property type="match status" value="1"/>
</dbReference>
<accession>S0F209</accession>
<sequence>MNTATGFIVLLVLATILGGIEAGESHMRKDAMGRVRRQYCVPVDQPCSLNTQPCCDDATCTQERNENGHTVYYCRA</sequence>
<protein>
    <recommendedName>
        <fullName evidence="3">Omega/Kappa-hexatoxin-Hv1h</fullName>
        <shortName evidence="5">Omega/Kappa-HXTX-Hv1h</shortName>
    </recommendedName>
</protein>
<comment type="function">
    <text evidence="4">Toxin that may inhibit ion channels.</text>
</comment>
<comment type="subcellular location">
    <subcellularLocation>
        <location evidence="5">Secreted</location>
    </subcellularLocation>
</comment>
<comment type="tissue specificity">
    <text evidence="5">Expressed by the venom gland.</text>
</comment>
<comment type="domain">
    <text evidence="4">The presence of a 'disulfide through disulfide knot' structurally defines this protein as a knottin.</text>
</comment>
<comment type="similarity">
    <text evidence="4">Belongs to the neurotoxin 08 (Shiva) family. 02 (omega/kappa toxin) subfamily.</text>
</comment>
<proteinExistence type="evidence at protein level"/>
<name>TOK1H_HADVE</name>